<name>KATG_JANMA</name>
<comment type="function">
    <text evidence="1">Bifunctional enzyme with both catalase and broad-spectrum peroxidase activity.</text>
</comment>
<comment type="catalytic activity">
    <reaction evidence="1">
        <text>H2O2 + AH2 = A + 2 H2O</text>
        <dbReference type="Rhea" id="RHEA:30275"/>
        <dbReference type="ChEBI" id="CHEBI:13193"/>
        <dbReference type="ChEBI" id="CHEBI:15377"/>
        <dbReference type="ChEBI" id="CHEBI:16240"/>
        <dbReference type="ChEBI" id="CHEBI:17499"/>
        <dbReference type="EC" id="1.11.1.21"/>
    </reaction>
</comment>
<comment type="catalytic activity">
    <reaction evidence="1">
        <text>2 H2O2 = O2 + 2 H2O</text>
        <dbReference type="Rhea" id="RHEA:20309"/>
        <dbReference type="ChEBI" id="CHEBI:15377"/>
        <dbReference type="ChEBI" id="CHEBI:15379"/>
        <dbReference type="ChEBI" id="CHEBI:16240"/>
        <dbReference type="EC" id="1.11.1.21"/>
    </reaction>
</comment>
<comment type="cofactor">
    <cofactor evidence="1">
        <name>heme b</name>
        <dbReference type="ChEBI" id="CHEBI:60344"/>
    </cofactor>
    <text evidence="1">Binds 1 heme b (iron(II)-protoporphyrin IX) group per dimer.</text>
</comment>
<comment type="subunit">
    <text evidence="1">Homodimer or homotetramer.</text>
</comment>
<comment type="PTM">
    <text evidence="1">Formation of the three residue Trp-Tyr-Met cross-link is important for the catalase, but not the peroxidase activity of the enzyme.</text>
</comment>
<comment type="similarity">
    <text evidence="1">Belongs to the peroxidase family. Peroxidase/catalase subfamily.</text>
</comment>
<reference key="1">
    <citation type="journal article" date="2007" name="PLoS Genet.">
        <title>Genome analysis of Minibacterium massiliensis highlights the convergent evolution of water-living bacteria.</title>
        <authorList>
            <person name="Audic S."/>
            <person name="Robert C."/>
            <person name="Campagna B."/>
            <person name="Parinello H."/>
            <person name="Claverie J.-M."/>
            <person name="Raoult D."/>
            <person name="Drancourt M."/>
        </authorList>
    </citation>
    <scope>NUCLEOTIDE SEQUENCE [LARGE SCALE GENOMIC DNA]</scope>
    <source>
        <strain>Marseille</strain>
    </source>
</reference>
<evidence type="ECO:0000255" key="1">
    <source>
        <dbReference type="HAMAP-Rule" id="MF_01961"/>
    </source>
</evidence>
<evidence type="ECO:0000256" key="2">
    <source>
        <dbReference type="SAM" id="MobiDB-lite"/>
    </source>
</evidence>
<sequence>MSSEAKCPFPHAANRSRSNQDWWPNQLRVDVLNQHSNKSNPLGEKFNYAEEFKKLDYKALKADLVKLMTDSQDWWPADFGHYGPQFVRMAWHATGTYRTMDGRGGGGRGQQRFAPLNSWPDNVNIDKSRRLLWPIKQKYGQRISWADLLVLTGNVALESMGFRTFGFAGGRADVWEPDTDVNWGAETTWLGTDKRFSGDRELDENLSATHMGLIYVNPEGPDGSGDYMAAAKDIRATFYRMAMDDEEIVALIAGGHTFGKAHGAAPESHKGAEPEGAPIEAQGLGWVSNFGDGYGKDTVSSGLEVTWTKTPALWSNNFFENLFKYEWEITKSPAGAKQWVAKDAEDIIPDAHIKGKFHKPTMLTTDLTLRFDPEFGKISKRFYEDPQAFAEAFARAWFKLTHRDMGPRSRYLGPEVPKEELIWQDPIPEVDYKLVDAADVTALKAKLLTSGLSVSELVGTAWASASTFRGSDKRGGANGARIRLAPMKDWEVNQPEQLAKVLKTLEGIQADFNQSASGGKQVSLADLIVLAGSVGVEQAAKAAGVNVSVPFAAGRNDARQDQTDVESFAALEPRTDGFRNYVGKKNGVPAEVALIDKAQLLCLSVPELTVLISGLRAININVGGVKHGVLTRTPGVLNNEVLLNLLDMGTQWKPVESDANVFEGRDRKSGEVKWTATRADLVFGSNSILRSVAEVYAESDAKEKFVKDFVAAWVKVMNADRFDLA</sequence>
<feature type="chain" id="PRO_0000354813" description="Catalase-peroxidase">
    <location>
        <begin position="1"/>
        <end position="725"/>
    </location>
</feature>
<feature type="region of interest" description="Disordered" evidence="2">
    <location>
        <begin position="1"/>
        <end position="20"/>
    </location>
</feature>
<feature type="active site" description="Proton acceptor" evidence="1">
    <location>
        <position position="92"/>
    </location>
</feature>
<feature type="binding site" description="axial binding residue" evidence="1">
    <location>
        <position position="256"/>
    </location>
    <ligand>
        <name>heme b</name>
        <dbReference type="ChEBI" id="CHEBI:60344"/>
    </ligand>
    <ligandPart>
        <name>Fe</name>
        <dbReference type="ChEBI" id="CHEBI:18248"/>
    </ligandPart>
</feature>
<feature type="site" description="Transition state stabilizer" evidence="1">
    <location>
        <position position="88"/>
    </location>
</feature>
<feature type="cross-link" description="Tryptophyl-tyrosyl-methioninium (Trp-Tyr) (with M-241)" evidence="1">
    <location>
        <begin position="91"/>
        <end position="215"/>
    </location>
</feature>
<feature type="cross-link" description="Tryptophyl-tyrosyl-methioninium (Tyr-Met) (with W-91)" evidence="1">
    <location>
        <begin position="215"/>
        <end position="241"/>
    </location>
</feature>
<proteinExistence type="inferred from homology"/>
<keyword id="KW-0349">Heme</keyword>
<keyword id="KW-0376">Hydrogen peroxide</keyword>
<keyword id="KW-0408">Iron</keyword>
<keyword id="KW-0479">Metal-binding</keyword>
<keyword id="KW-0560">Oxidoreductase</keyword>
<keyword id="KW-0575">Peroxidase</keyword>
<dbReference type="EC" id="1.11.1.21" evidence="1"/>
<dbReference type="EMBL" id="CP000269">
    <property type="protein sequence ID" value="ABR88756.1"/>
    <property type="molecule type" value="Genomic_DNA"/>
</dbReference>
<dbReference type="RefSeq" id="WP_012079409.1">
    <property type="nucleotide sequence ID" value="NC_009659.1"/>
</dbReference>
<dbReference type="SMR" id="A6SY97"/>
<dbReference type="STRING" id="375286.mma_1554"/>
<dbReference type="KEGG" id="mms:mma_1554"/>
<dbReference type="eggNOG" id="COG0376">
    <property type="taxonomic scope" value="Bacteria"/>
</dbReference>
<dbReference type="HOGENOM" id="CLU_025424_2_0_4"/>
<dbReference type="OrthoDB" id="9759743at2"/>
<dbReference type="Proteomes" id="UP000006388">
    <property type="component" value="Chromosome"/>
</dbReference>
<dbReference type="GO" id="GO:0005829">
    <property type="term" value="C:cytosol"/>
    <property type="evidence" value="ECO:0007669"/>
    <property type="project" value="TreeGrafter"/>
</dbReference>
<dbReference type="GO" id="GO:0004096">
    <property type="term" value="F:catalase activity"/>
    <property type="evidence" value="ECO:0007669"/>
    <property type="project" value="UniProtKB-UniRule"/>
</dbReference>
<dbReference type="GO" id="GO:0020037">
    <property type="term" value="F:heme binding"/>
    <property type="evidence" value="ECO:0007669"/>
    <property type="project" value="InterPro"/>
</dbReference>
<dbReference type="GO" id="GO:0046872">
    <property type="term" value="F:metal ion binding"/>
    <property type="evidence" value="ECO:0007669"/>
    <property type="project" value="UniProtKB-KW"/>
</dbReference>
<dbReference type="GO" id="GO:0070301">
    <property type="term" value="P:cellular response to hydrogen peroxide"/>
    <property type="evidence" value="ECO:0007669"/>
    <property type="project" value="TreeGrafter"/>
</dbReference>
<dbReference type="GO" id="GO:0042744">
    <property type="term" value="P:hydrogen peroxide catabolic process"/>
    <property type="evidence" value="ECO:0007669"/>
    <property type="project" value="UniProtKB-KW"/>
</dbReference>
<dbReference type="CDD" id="cd00649">
    <property type="entry name" value="catalase_peroxidase_1"/>
    <property type="match status" value="1"/>
</dbReference>
<dbReference type="CDD" id="cd08200">
    <property type="entry name" value="catalase_peroxidase_2"/>
    <property type="match status" value="1"/>
</dbReference>
<dbReference type="FunFam" id="1.10.420.10:FF:000002">
    <property type="entry name" value="Catalase-peroxidase"/>
    <property type="match status" value="1"/>
</dbReference>
<dbReference type="FunFam" id="1.10.420.10:FF:000004">
    <property type="entry name" value="Catalase-peroxidase"/>
    <property type="match status" value="1"/>
</dbReference>
<dbReference type="FunFam" id="1.10.520.10:FF:000002">
    <property type="entry name" value="Catalase-peroxidase"/>
    <property type="match status" value="1"/>
</dbReference>
<dbReference type="Gene3D" id="1.10.520.10">
    <property type="match status" value="2"/>
</dbReference>
<dbReference type="Gene3D" id="1.10.420.10">
    <property type="entry name" value="Peroxidase, domain 2"/>
    <property type="match status" value="2"/>
</dbReference>
<dbReference type="HAMAP" id="MF_01961">
    <property type="entry name" value="Catal_peroxid"/>
    <property type="match status" value="1"/>
</dbReference>
<dbReference type="InterPro" id="IPR000763">
    <property type="entry name" value="Catalase_peroxidase"/>
</dbReference>
<dbReference type="InterPro" id="IPR002016">
    <property type="entry name" value="Haem_peroxidase"/>
</dbReference>
<dbReference type="InterPro" id="IPR010255">
    <property type="entry name" value="Haem_peroxidase_sf"/>
</dbReference>
<dbReference type="NCBIfam" id="TIGR00198">
    <property type="entry name" value="cat_per_HPI"/>
    <property type="match status" value="1"/>
</dbReference>
<dbReference type="NCBIfam" id="NF011635">
    <property type="entry name" value="PRK15061.1"/>
    <property type="match status" value="1"/>
</dbReference>
<dbReference type="PANTHER" id="PTHR30555:SF0">
    <property type="entry name" value="CATALASE-PEROXIDASE"/>
    <property type="match status" value="1"/>
</dbReference>
<dbReference type="PANTHER" id="PTHR30555">
    <property type="entry name" value="HYDROPEROXIDASE I, BIFUNCTIONAL CATALASE-PEROXIDASE"/>
    <property type="match status" value="1"/>
</dbReference>
<dbReference type="Pfam" id="PF00141">
    <property type="entry name" value="peroxidase"/>
    <property type="match status" value="2"/>
</dbReference>
<dbReference type="PRINTS" id="PR00460">
    <property type="entry name" value="BPEROXIDASE"/>
</dbReference>
<dbReference type="PRINTS" id="PR00458">
    <property type="entry name" value="PEROXIDASE"/>
</dbReference>
<dbReference type="SUPFAM" id="SSF48113">
    <property type="entry name" value="Heme-dependent peroxidases"/>
    <property type="match status" value="2"/>
</dbReference>
<dbReference type="PROSITE" id="PS50873">
    <property type="entry name" value="PEROXIDASE_4"/>
    <property type="match status" value="1"/>
</dbReference>
<gene>
    <name evidence="1" type="primary">katG</name>
    <name type="ordered locus">mma_1554</name>
</gene>
<protein>
    <recommendedName>
        <fullName evidence="1">Catalase-peroxidase</fullName>
        <shortName evidence="1">CP</shortName>
        <ecNumber evidence="1">1.11.1.21</ecNumber>
    </recommendedName>
    <alternativeName>
        <fullName evidence="1">Peroxidase/catalase</fullName>
    </alternativeName>
</protein>
<accession>A6SY97</accession>
<organism>
    <name type="scientific">Janthinobacterium sp. (strain Marseille)</name>
    <name type="common">Minibacterium massiliensis</name>
    <dbReference type="NCBI Taxonomy" id="375286"/>
    <lineage>
        <taxon>Bacteria</taxon>
        <taxon>Pseudomonadati</taxon>
        <taxon>Pseudomonadota</taxon>
        <taxon>Betaproteobacteria</taxon>
        <taxon>Burkholderiales</taxon>
        <taxon>Oxalobacteraceae</taxon>
        <taxon>Janthinobacterium</taxon>
    </lineage>
</organism>